<feature type="chain" id="PRO_0000387979" description="Post-transcriptional regulator MTA">
    <location>
        <begin position="1"/>
        <end position="455"/>
    </location>
</feature>
<feature type="zinc finger region" description="CHC2-type" evidence="1">
    <location>
        <begin position="333"/>
        <end position="432"/>
    </location>
</feature>
<feature type="region of interest" description="Disordered" evidence="3">
    <location>
        <begin position="17"/>
        <end position="163"/>
    </location>
</feature>
<feature type="short sequence motif" description="Nuclear localization signal" evidence="2">
    <location>
        <begin position="101"/>
        <end position="107"/>
    </location>
</feature>
<feature type="short sequence motif" description="Nuclear localization signal" evidence="2">
    <location>
        <begin position="121"/>
        <end position="130"/>
    </location>
</feature>
<feature type="short sequence motif" description="Nuclear localization signal" evidence="2">
    <location>
        <begin position="143"/>
        <end position="152"/>
    </location>
</feature>
<feature type="compositionally biased region" description="Acidic residues" evidence="3">
    <location>
        <begin position="23"/>
        <end position="42"/>
    </location>
</feature>
<feature type="compositionally biased region" description="Low complexity" evidence="3">
    <location>
        <begin position="88"/>
        <end position="98"/>
    </location>
</feature>
<feature type="binding site" evidence="1">
    <location>
        <position position="333"/>
    </location>
    <ligand>
        <name>Zn(2+)</name>
        <dbReference type="ChEBI" id="CHEBI:29105"/>
    </ligand>
</feature>
<feature type="binding site" evidence="1">
    <location>
        <position position="423"/>
    </location>
    <ligand>
        <name>Zn(2+)</name>
        <dbReference type="ChEBI" id="CHEBI:29105"/>
    </ligand>
</feature>
<feature type="binding site" evidence="1">
    <location>
        <position position="427"/>
    </location>
    <ligand>
        <name>Zn(2+)</name>
        <dbReference type="ChEBI" id="CHEBI:29105"/>
    </ligand>
</feature>
<feature type="binding site" evidence="1">
    <location>
        <position position="432"/>
    </location>
    <ligand>
        <name>Zn(2+)</name>
        <dbReference type="ChEBI" id="CHEBI:29105"/>
    </ligand>
</feature>
<feature type="site" description="Cleavage; by host caspase-7" evidence="6">
    <location>
        <begin position="33"/>
        <end position="34"/>
    </location>
</feature>
<feature type="mutagenesis site" description="Does not affect cleavage by caspase-7 (CASP7)." evidence="6">
    <original>DESRD</original>
    <variation>AESRA</variation>
    <location>
        <begin position="25"/>
        <end position="29"/>
    </location>
</feature>
<feature type="mutagenesis site" description="Does not affect cleavage by caspase-7 (CASP7)." evidence="6">
    <original>D</original>
    <variation>A</variation>
    <location>
        <position position="30"/>
    </location>
</feature>
<feature type="mutagenesis site" description="Abolished cleavage by caspase-7 (CASP7)." evidence="6">
    <original>D</original>
    <variation>A</variation>
    <location>
        <position position="33"/>
    </location>
</feature>
<feature type="mutagenesis site" description="Complete loss of dimerization." evidence="10">
    <original>W</original>
    <variation>P</variation>
    <location>
        <position position="292"/>
    </location>
</feature>
<feature type="sequence conflict" description="In Ref. 2; AAB62615." evidence="13" ref="2">
    <original>MVQAMIDMDIMKGILE</original>
    <variation>RIVLSSSPGGPSPHPSFIAFDIT</variation>
    <location>
        <begin position="1"/>
        <end position="16"/>
    </location>
</feature>
<feature type="helix" evidence="16">
    <location>
        <begin position="197"/>
        <end position="199"/>
    </location>
</feature>
<feature type="helix" evidence="16">
    <location>
        <begin position="224"/>
        <end position="230"/>
    </location>
</feature>
<feature type="helix" evidence="16">
    <location>
        <begin position="236"/>
        <end position="239"/>
    </location>
</feature>
<feature type="helix" evidence="16">
    <location>
        <begin position="243"/>
        <end position="248"/>
    </location>
</feature>
<feature type="helix" evidence="16">
    <location>
        <begin position="250"/>
        <end position="257"/>
    </location>
</feature>
<feature type="helix" evidence="16">
    <location>
        <begin position="263"/>
        <end position="276"/>
    </location>
</feature>
<feature type="helix" evidence="16">
    <location>
        <begin position="279"/>
        <end position="298"/>
    </location>
</feature>
<feature type="strand" evidence="16">
    <location>
        <begin position="305"/>
        <end position="307"/>
    </location>
</feature>
<feature type="helix" evidence="16">
    <location>
        <begin position="312"/>
        <end position="314"/>
    </location>
</feature>
<feature type="helix" evidence="16">
    <location>
        <begin position="315"/>
        <end position="326"/>
    </location>
</feature>
<feature type="helix" evidence="16">
    <location>
        <begin position="331"/>
        <end position="335"/>
    </location>
</feature>
<feature type="helix" evidence="16">
    <location>
        <begin position="338"/>
        <end position="352"/>
    </location>
</feature>
<feature type="strand" evidence="16">
    <location>
        <begin position="353"/>
        <end position="355"/>
    </location>
</feature>
<feature type="helix" evidence="16">
    <location>
        <begin position="357"/>
        <end position="366"/>
    </location>
</feature>
<feature type="helix" evidence="16">
    <location>
        <begin position="372"/>
        <end position="387"/>
    </location>
</feature>
<feature type="helix" evidence="16">
    <location>
        <begin position="388"/>
        <end position="391"/>
    </location>
</feature>
<feature type="helix" evidence="16">
    <location>
        <begin position="394"/>
        <end position="405"/>
    </location>
</feature>
<feature type="helix" evidence="16">
    <location>
        <begin position="411"/>
        <end position="423"/>
    </location>
</feature>
<feature type="turn" evidence="16">
    <location>
        <begin position="424"/>
        <end position="426"/>
    </location>
</feature>
<feature type="helix" evidence="16">
    <location>
        <begin position="430"/>
        <end position="439"/>
    </location>
</feature>
<keyword id="KW-0002">3D-structure</keyword>
<keyword id="KW-0010">Activator</keyword>
<keyword id="KW-0244">Early protein</keyword>
<keyword id="KW-1035">Host cytoplasm</keyword>
<keyword id="KW-1048">Host nucleus</keyword>
<keyword id="KW-0479">Metal-binding</keyword>
<keyword id="KW-1185">Reference proteome</keyword>
<keyword id="KW-0694">RNA-binding</keyword>
<keyword id="KW-0804">Transcription</keyword>
<keyword id="KW-0805">Transcription regulation</keyword>
<keyword id="KW-0862">Zinc</keyword>
<keyword id="KW-0863">Zinc-finger</keyword>
<gene>
    <name type="ORF">ORF57</name>
</gene>
<proteinExistence type="evidence at protein level"/>
<dbReference type="EMBL" id="AF148805">
    <property type="protein sequence ID" value="ABD28908.1"/>
    <property type="molecule type" value="Genomic_DNA"/>
</dbReference>
<dbReference type="EMBL" id="U93872">
    <property type="protein sequence ID" value="AAB62615.1"/>
    <property type="molecule type" value="Genomic_DNA"/>
</dbReference>
<dbReference type="RefSeq" id="YP_001129410.1">
    <property type="nucleotide sequence ID" value="NC_009333.1"/>
</dbReference>
<dbReference type="PDB" id="5ZB1">
    <property type="method" value="X-ray"/>
    <property type="resolution" value="3.06 A"/>
    <property type="chains" value="A=168-455"/>
</dbReference>
<dbReference type="PDB" id="5ZB3">
    <property type="method" value="X-ray"/>
    <property type="resolution" value="3.51 A"/>
    <property type="chains" value="A/B=168-455"/>
</dbReference>
<dbReference type="PDBsum" id="5ZB1"/>
<dbReference type="PDBsum" id="5ZB3"/>
<dbReference type="SMR" id="Q2HR75"/>
<dbReference type="BioGRID" id="1777028">
    <property type="interactions" value="141"/>
</dbReference>
<dbReference type="IntAct" id="Q2HR75">
    <property type="interactions" value="9"/>
</dbReference>
<dbReference type="MINT" id="Q2HR75"/>
<dbReference type="DNASU" id="4961525"/>
<dbReference type="GeneID" id="4961525"/>
<dbReference type="KEGG" id="vg:4961525"/>
<dbReference type="Proteomes" id="UP000000942">
    <property type="component" value="Segment"/>
</dbReference>
<dbReference type="GO" id="GO:0030430">
    <property type="term" value="C:host cell cytoplasm"/>
    <property type="evidence" value="ECO:0000314"/>
    <property type="project" value="UniProt"/>
</dbReference>
<dbReference type="GO" id="GO:0042025">
    <property type="term" value="C:host cell nucleus"/>
    <property type="evidence" value="ECO:0007669"/>
    <property type="project" value="UniProtKB-SubCell"/>
</dbReference>
<dbReference type="GO" id="GO:0140311">
    <property type="term" value="F:protein sequestering activity"/>
    <property type="evidence" value="ECO:0000314"/>
    <property type="project" value="UniProt"/>
</dbReference>
<dbReference type="GO" id="GO:0003723">
    <property type="term" value="F:RNA binding"/>
    <property type="evidence" value="ECO:0007669"/>
    <property type="project" value="UniProtKB-KW"/>
</dbReference>
<dbReference type="GO" id="GO:0008270">
    <property type="term" value="F:zinc ion binding"/>
    <property type="evidence" value="ECO:0007669"/>
    <property type="project" value="UniProtKB-KW"/>
</dbReference>
<dbReference type="GO" id="GO:1903902">
    <property type="term" value="P:positive regulation of viral life cycle"/>
    <property type="evidence" value="ECO:0000314"/>
    <property type="project" value="UniProt"/>
</dbReference>
<dbReference type="GO" id="GO:0006355">
    <property type="term" value="P:regulation of DNA-templated transcription"/>
    <property type="evidence" value="ECO:0007669"/>
    <property type="project" value="InterPro"/>
</dbReference>
<dbReference type="GO" id="GO:0039580">
    <property type="term" value="P:symbiont-mediated suppression of host PKR/eIFalpha signaling"/>
    <property type="evidence" value="ECO:0000314"/>
    <property type="project" value="UniProt"/>
</dbReference>
<dbReference type="InterPro" id="IPR008648">
    <property type="entry name" value="ICP27-like"/>
</dbReference>
<dbReference type="Pfam" id="PF05459">
    <property type="entry name" value="Herpes_UL69"/>
    <property type="match status" value="1"/>
</dbReference>
<name>MTA_HHV8P</name>
<evidence type="ECO:0000250" key="1">
    <source>
        <dbReference type="UniProtKB" id="P10238"/>
    </source>
</evidence>
<evidence type="ECO:0000255" key="2"/>
<evidence type="ECO:0000256" key="3">
    <source>
        <dbReference type="SAM" id="MobiDB-lite"/>
    </source>
</evidence>
<evidence type="ECO:0000269" key="4">
    <source>
    </source>
</evidence>
<evidence type="ECO:0000269" key="5">
    <source>
    </source>
</evidence>
<evidence type="ECO:0000269" key="6">
    <source>
    </source>
</evidence>
<evidence type="ECO:0000269" key="7">
    <source>
    </source>
</evidence>
<evidence type="ECO:0000269" key="8">
    <source>
    </source>
</evidence>
<evidence type="ECO:0000269" key="9">
    <source>
    </source>
</evidence>
<evidence type="ECO:0000269" key="10">
    <source>
    </source>
</evidence>
<evidence type="ECO:0000269" key="11">
    <source>
    </source>
</evidence>
<evidence type="ECO:0000269" key="12">
    <source>
    </source>
</evidence>
<evidence type="ECO:0000305" key="13"/>
<evidence type="ECO:0007744" key="14">
    <source>
        <dbReference type="PDB" id="5ZB1"/>
    </source>
</evidence>
<evidence type="ECO:0007744" key="15">
    <source>
        <dbReference type="PDB" id="5ZB3"/>
    </source>
</evidence>
<evidence type="ECO:0007829" key="16">
    <source>
        <dbReference type="PDB" id="5ZB1"/>
    </source>
</evidence>
<organism>
    <name type="scientific">Human herpesvirus 8 type P (isolate GK18)</name>
    <name type="common">HHV-8</name>
    <name type="synonym">Kaposi's sarcoma-associated herpesvirus</name>
    <dbReference type="NCBI Taxonomy" id="868565"/>
    <lineage>
        <taxon>Viruses</taxon>
        <taxon>Duplodnaviria</taxon>
        <taxon>Heunggongvirae</taxon>
        <taxon>Peploviricota</taxon>
        <taxon>Herviviricetes</taxon>
        <taxon>Herpesvirales</taxon>
        <taxon>Orthoherpesviridae</taxon>
        <taxon>Gammaherpesvirinae</taxon>
        <taxon>Rhadinovirus</taxon>
        <taxon>Rhadinovirus humangamma8</taxon>
        <taxon>Human herpesvirus 8</taxon>
    </lineage>
</organism>
<organismHost>
    <name type="scientific">Homo sapiens</name>
    <name type="common">Human</name>
    <dbReference type="NCBI Taxonomy" id="9606"/>
</organismHost>
<accession>Q2HR75</accession>
<accession>O40938</accession>
<comment type="function">
    <text evidence="5 7 9 11 12">Post-transcriptional regulator that plays an essential role in the expression of viral lytic genes and productive viral replication. Possesses numerous activities that promote the expression of viral genes including enhancement of RNA stability, promotion of RNA splicing and stimulation of protein translation often via its ability to interact with different cellular cofactors. Stabilizes polyadenylated nuclear (PAN) RNA by cooperative binding to a 9-nt core of the MRE (MTA responsive element) together with host PABPC1 (PubMed:23077296). Functions as a viral splicing factor and promotes expression of intron-containing viral lytic genes (PubMed:18184716). Protects viral transcripts from specific nuclear RNA decay pathways by preventing host MTREX recruitment that promotes unwinding and degradation of structured RNA substrates (PubMed:30785952). Plays a role in the inhibition of host P-body formation by altering the scaffolding activity of TNRC6A at the initial stage thereby enhancing virus production (PubMed:31400113). Also inhibits host stress granule formation by blocking autophosphorylation of EIF2AK2/PKR and its subsequent binding to dsRNA (PubMed:29084250).</text>
</comment>
<comment type="subunit">
    <text evidence="4 7 8 9 10 12">Homodimer (PubMed:30096191). Homodimerization is required for transactivation (PubMed:30096191). Interacts with host ALYREF (PubMed:15155762). Associates in a complex with RNA, and host export factors NXF1/TAP and ALYREF; these interactions allow nuclear export of viral transcripts (PubMed:15155762). Interacts with protein K-bZIP/K8; this interaction promotes viral gene expression during lytic infection (PubMed:23365430). Interacts with host PABPC1 (PubMed:23077296). Interacts with host AGO2 and TNRC6A; these interactions inhibit host P-body formation (PubMed:31400113). Interacts with PRKRA and EIF2AK2/PKR; these interactions inhibit host stress granule formation (PubMed:29084250).</text>
</comment>
<comment type="interaction">
    <interactant intactId="EBI-6884751">
        <id>Q2HR75</id>
    </interactant>
    <interactant intactId="EBI-9006943">
        <id>Q2HR82</id>
        <label>K8</label>
    </interactant>
    <organismsDiffer>false</organismsDiffer>
    <experiments>5</experiments>
</comment>
<comment type="interaction">
    <interactant intactId="EBI-6884751">
        <id>Q2HR75</id>
    </interactant>
    <interactant intactId="EBI-347640">
        <id>Q86V81</id>
        <label>ALYREF</label>
    </interactant>
    <organismsDiffer>true</organismsDiffer>
    <experiments>4</experiments>
</comment>
<comment type="interaction">
    <interactant intactId="EBI-6884751">
        <id>Q2HR75</id>
    </interactant>
    <interactant intactId="EBI-724553">
        <id>Q96QD9</id>
        <label>FYTTD1</label>
    </interactant>
    <organismsDiffer>true</organismsDiffer>
    <experiments>9</experiments>
</comment>
<comment type="interaction">
    <interactant intactId="EBI-6884751">
        <id>Q2HR75</id>
    </interactant>
    <interactant intactId="EBI-2352802">
        <id>Q9BRP8</id>
        <label>PYM1</label>
    </interactant>
    <organismsDiffer>true</organismsDiffer>
    <experiments>4</experiments>
</comment>
<comment type="subcellular location">
    <subcellularLocation>
        <location evidence="6">Host cytoplasm</location>
    </subcellularLocation>
    <subcellularLocation>
        <location evidence="7 9 10 12">Host nucleus</location>
    </subcellularLocation>
    <text evidence="5">Distributes in host nuclear splicing speckles.</text>
</comment>
<comment type="induction">
    <text>Transactivated by ORF50 protein.</text>
</comment>
<comment type="domain">
    <text evidence="1">Binds viral intronless RNAs.</text>
</comment>
<comment type="PTM">
    <text evidence="6">Proteolytically cleaved by host caspase-7 (CASP7), leading to its inactivation, thereby preventing expression of viral lytic genes.</text>
</comment>
<comment type="miscellaneous">
    <text>ORF50 and ORF57 are the earliest genes expressed in the lytic cycle.</text>
</comment>
<comment type="similarity">
    <text evidence="13">Belongs to the HHV-1 ICP27 protein family.</text>
</comment>
<reference key="1">
    <citation type="journal article" date="2006" name="J. Gen. Virol.">
        <title>Kaposi's sarcoma-associated herpesvirus immune modulation: an overview.</title>
        <authorList>
            <person name="Rezaee S.A.R."/>
            <person name="Cunningham C."/>
            <person name="Davison A.J."/>
            <person name="Blackbourn D.J."/>
        </authorList>
    </citation>
    <scope>NUCLEOTIDE SEQUENCE [GENOMIC DNA]</scope>
</reference>
<reference key="2">
    <citation type="submission" date="2001-07" db="EMBL/GenBank/DDBJ databases">
        <title>The genome of human herpesvirus 8 cloned from Kaposi's sarcoma.</title>
        <authorList>
            <person name="Neipel F."/>
            <person name="Albrecht J.-C."/>
            <person name="Ensser A."/>
            <person name="Huang Y.-Q."/>
            <person name="Li J.J."/>
            <person name="Friedman-Kien A.E."/>
            <person name="Fleckenstein B."/>
        </authorList>
    </citation>
    <scope>NUCLEOTIDE SEQUENCE [GENOMIC DNA]</scope>
</reference>
<reference key="3">
    <citation type="journal article" date="2004" name="J. Biol. Chem.">
        <title>The evolutionarily conserved Kaposi's sarcoma-associated herpesvirus ORF57 protein interacts with REF protein and acts as an RNA export factor.</title>
        <authorList>
            <person name="Malik P."/>
            <person name="Blackbourn D.J."/>
            <person name="Clements J.B."/>
        </authorList>
    </citation>
    <scope>FUNCTION</scope>
    <scope>INTERACTION WITH HUMAN ALYREF</scope>
</reference>
<reference key="4">
    <citation type="journal article" date="2008" name="J. Virol.">
        <title>Kaposi's sarcoma-associated herpesvirus ORF57 functions as a viral splicing factor and promotes expression of intron-containing viral lytic genes in spliceosome-mediated RNA splicing.</title>
        <authorList>
            <person name="Majerciak V."/>
            <person name="Yamanegi K."/>
            <person name="Allemand E."/>
            <person name="Kruhlak M."/>
            <person name="Krainer A.R."/>
            <person name="Zheng Z.M."/>
        </authorList>
    </citation>
    <scope>FUNCTION</scope>
    <scope>SUBCELLULAR LOCATION</scope>
</reference>
<reference key="5">
    <citation type="journal article" date="2009" name="Front. Biosci.">
        <title>Kaposi's sarcoma-associated herpesvirus ORF57 in viral RNA processing.</title>
        <authorList>
            <person name="Majerciak V."/>
            <person name="Zheng Z.-M."/>
        </authorList>
    </citation>
    <scope>REVIEW</scope>
</reference>
<reference key="6">
    <citation type="journal article" date="2010" name="J. Biol. Chem.">
        <title>Caspase-7 cleavage of Kaposi sarcoma-associated herpesvirus ORF57 confers a cellular function against viral lytic gene expression.</title>
        <authorList>
            <person name="Majerciak V."/>
            <person name="Kruhlak M."/>
            <person name="Dagur P.K."/>
            <person name="McCoy J.P. Jr."/>
            <person name="Zheng Z.M."/>
        </authorList>
    </citation>
    <scope>SUBCELLULAR LOCATION</scope>
    <scope>PROTEOLYTIC CLEAVAGE</scope>
    <scope>MUTAGENESIS OF 25-ASP--ASP-29; ASP-30 AND ASP-33</scope>
</reference>
<reference key="7">
    <citation type="journal article" date="2013" name="J. Virol.">
        <title>Chromatin immunoprecipitation and microarray analysis suggest functional cooperation between Kaposi's Sarcoma-associated herpesvirus ORF57 and K-bZIP.</title>
        <authorList>
            <person name="Hunter O.V."/>
            <person name="Sei E."/>
            <person name="Richardson R.B."/>
            <person name="Conrad N.K."/>
        </authorList>
    </citation>
    <scope>INTERACTION WITH PROTEIN KBZIP/K8</scope>
</reference>
<reference key="8">
    <citation type="journal article" date="2013" name="J. Virol.">
        <title>Interplay between polyadenylate-binding protein 1 and Kaposi's sarcoma-associated herpesvirus ORF57 in accumulation of polyadenylated nuclear RNA, a viral long noncoding RNA.</title>
        <authorList>
            <person name="Massimelli M.J."/>
            <person name="Majerciak V."/>
            <person name="Kruhlak M."/>
            <person name="Zheng Z.M."/>
        </authorList>
    </citation>
    <scope>FUNCTION</scope>
    <scope>INTERACTION WITH HOST PABPC1</scope>
    <scope>SUBCELLULAR LOCATION</scope>
</reference>
<reference key="9">
    <citation type="journal article" date="2017" name="PLoS Pathog.">
        <title>KSHV inhibits stress granule formation by viral ORF57 blocking PKR activation.</title>
        <authorList>
            <person name="Sharma N.R."/>
            <person name="Majerciak V."/>
            <person name="Kruhlak M.J."/>
            <person name="Zheng Z.M."/>
        </authorList>
    </citation>
    <scope>FUNCTION</scope>
    <scope>INTERACTION WITH HOST PRKRA AND EIF2AK2/PKR</scope>
    <scope>SUBCELLULAR LOCATION</scope>
</reference>
<reference key="10">
    <citation type="journal article" date="2019" name="PLoS Pathog.">
        <title>Kaposi's sarcoma-associated herpesvirus ORF57 protein protects viral transcripts from specific nuclear RNA decay pathways by preventing hMTR4 recruitment.</title>
        <authorList>
            <person name="Ruiz J.C."/>
            <person name="Hunter O.V."/>
            <person name="Conrad N.K."/>
        </authorList>
    </citation>
    <scope>FUNCTION</scope>
</reference>
<reference key="11">
    <citation type="journal article" date="2019" name="Nucleic Acids Res.">
        <title>KSHV RNA-binding protein ORF57 inhibits P-body formation to promote viral multiplication by interaction with Ago2 and GW182.</title>
        <authorList>
            <person name="Sharma N.R."/>
            <person name="Majerciak V."/>
            <person name="Kruhlak M.J."/>
            <person name="Yu L."/>
            <person name="Kang J.G."/>
            <person name="Yang A."/>
            <person name="Gu S."/>
            <person name="Fritzler M.J."/>
            <person name="Zheng Z.M."/>
        </authorList>
    </citation>
    <scope>FUNCTION</scope>
    <scope>SUBCELLULAR LOCATION</scope>
    <scope>INTERACTION WITH HOST AGO2 AND TNRC6A</scope>
</reference>
<reference evidence="14 15" key="12">
    <citation type="journal article" date="2018" name="PLoS Pathog.">
        <title>The crystal structure of KSHV ORF57 reveals dimeric active sites important for protein stability and function.</title>
        <authorList>
            <person name="Yuan F."/>
            <person name="Gao Z.Q."/>
            <person name="Majerciak V."/>
            <person name="Bai L."/>
            <person name="Hu M.L."/>
            <person name="Lin X.X."/>
            <person name="Zheng Z.M."/>
            <person name="Dong Y.H."/>
            <person name="Lan K."/>
        </authorList>
    </citation>
    <scope>X-RAY CRYSTALLOGRAPHY (3.06 ANGSTROMS) OF 168-455</scope>
    <scope>SUBUNIT</scope>
    <scope>SUBCELLULAR LOCATION</scope>
    <scope>MUTAGENESIS OF TRP-292</scope>
</reference>
<sequence>MVQAMIDMDIMKGILEDSVSSSEFDESRDDETDAPTLEDEQLSEPAEPPADERIRGTQSAQGIPPPLGRIPKKSQGRSQLRSEIQFCSPLSRPRSPSPVNRYGKKIKFGTAGQNTRPPPEKRPRRRPRDRLQYGRTTRGGQCRAAPKRATRRPQVNCQRQDDDVRQGVSDAVKKLRLPASMIIDGESPRFDDSIIPRHHGACFNVFIPAPPSHVPEVFTDRDITALIRAGGKDDELINKKISAKKIDHLHRQMLSFVTSRHNQAYWVSCRRETAAAGGLQTLGAFVEEQMTWAQTVVRHGGWFDEKDIDIILDTAIFVCNAFVTRFRLLHLSCVFDKQSELALIKQVAYLVAMGNRLVEACNLLGEVKLNFRGGLLLAFVLTIPGMQSRRSISARGQELFRTLLEYYRPGDVMGLLNVIVMEHHSLCRNSECAAATRAAMGSAKFNKGLFFYPLS</sequence>
<protein>
    <recommendedName>
        <fullName>Post-transcriptional regulator MTA</fullName>
        <shortName>MTA</shortName>
    </recommendedName>
    <alternativeName>
        <fullName>EB2 protein homolog</fullName>
    </alternativeName>
</protein>